<reference key="1">
    <citation type="journal article" date="2006" name="Proc. Natl. Acad. Sci. U.S.A.">
        <title>Identification of genes subject to positive selection in uropathogenic strains of Escherichia coli: a comparative genomics approach.</title>
        <authorList>
            <person name="Chen S.L."/>
            <person name="Hung C.-S."/>
            <person name="Xu J."/>
            <person name="Reigstad C.S."/>
            <person name="Magrini V."/>
            <person name="Sabo A."/>
            <person name="Blasiar D."/>
            <person name="Bieri T."/>
            <person name="Meyer R.R."/>
            <person name="Ozersky P."/>
            <person name="Armstrong J.R."/>
            <person name="Fulton R.S."/>
            <person name="Latreille J.P."/>
            <person name="Spieth J."/>
            <person name="Hooton T.M."/>
            <person name="Mardis E.R."/>
            <person name="Hultgren S.J."/>
            <person name="Gordon J.I."/>
        </authorList>
    </citation>
    <scope>NUCLEOTIDE SEQUENCE [LARGE SCALE GENOMIC DNA]</scope>
    <source>
        <strain>UTI89 / UPEC</strain>
    </source>
</reference>
<keyword id="KW-0131">Cell cycle</keyword>
<keyword id="KW-0132">Cell division</keyword>
<keyword id="KW-0997">Cell inner membrane</keyword>
<keyword id="KW-1003">Cell membrane</keyword>
<keyword id="KW-0472">Membrane</keyword>
<keyword id="KW-0812">Transmembrane</keyword>
<keyword id="KW-1133">Transmembrane helix</keyword>
<protein>
    <recommendedName>
        <fullName evidence="1">Cell division protein ZipA</fullName>
    </recommendedName>
</protein>
<sequence length="332" mass="36937">MMQDLRLILIIVGAIAIIALLVHGFWTSRKERSSMFRDRPLKRMKSKRDDDSYDEDVEDDEGVGEVRVHRVNHAPANAQEHEAARPSPQHQYQPPYASAQPRQPVQQPPEAQVPPQHAPRPAQPVQQPVQQPAYQPQPEQPLQQPVSPQVASAPQPVHSAPQPAQQAFQPAEPVAAPQPEPVAEPAPVMDKPKRKEAVIIMNVAAHHGSELNGELLLNSIQQAGFIFGDMNIYHRHLSPDGSGPALFSLANMVKPGTFDPEMKDFTTPGVTIFMQVPSYGDELQNFKLMLQSAQHIADEVGGVVLDDQRRMMTPQKLREYQDIIREVKDANA</sequence>
<feature type="chain" id="PRO_0000258588" description="Cell division protein ZipA">
    <location>
        <begin position="1"/>
        <end position="332"/>
    </location>
</feature>
<feature type="topological domain" description="Periplasmic" evidence="1">
    <location>
        <begin position="1"/>
        <end position="6"/>
    </location>
</feature>
<feature type="transmembrane region" description="Helical" evidence="1">
    <location>
        <begin position="7"/>
        <end position="27"/>
    </location>
</feature>
<feature type="topological domain" description="Cytoplasmic" evidence="1">
    <location>
        <begin position="28"/>
        <end position="332"/>
    </location>
</feature>
<feature type="region of interest" description="Disordered" evidence="2">
    <location>
        <begin position="42"/>
        <end position="190"/>
    </location>
</feature>
<feature type="compositionally biased region" description="Acidic residues" evidence="2">
    <location>
        <begin position="51"/>
        <end position="63"/>
    </location>
</feature>
<feature type="compositionally biased region" description="Low complexity" evidence="2">
    <location>
        <begin position="99"/>
        <end position="115"/>
    </location>
</feature>
<feature type="compositionally biased region" description="Low complexity" evidence="2">
    <location>
        <begin position="123"/>
        <end position="151"/>
    </location>
</feature>
<feature type="compositionally biased region" description="Low complexity" evidence="2">
    <location>
        <begin position="160"/>
        <end position="175"/>
    </location>
</feature>
<organism>
    <name type="scientific">Escherichia coli (strain UTI89 / UPEC)</name>
    <dbReference type="NCBI Taxonomy" id="364106"/>
    <lineage>
        <taxon>Bacteria</taxon>
        <taxon>Pseudomonadati</taxon>
        <taxon>Pseudomonadota</taxon>
        <taxon>Gammaproteobacteria</taxon>
        <taxon>Enterobacterales</taxon>
        <taxon>Enterobacteriaceae</taxon>
        <taxon>Escherichia</taxon>
    </lineage>
</organism>
<comment type="function">
    <text evidence="1">Essential cell division protein that stabilizes the FtsZ protofilaments by cross-linking them and that serves as a cytoplasmic membrane anchor for the Z ring. Also required for the recruitment to the septal ring of downstream cell division proteins.</text>
</comment>
<comment type="subunit">
    <text evidence="1">Interacts with FtsZ via their C-terminal domains.</text>
</comment>
<comment type="subcellular location">
    <subcellularLocation>
        <location evidence="1">Cell inner membrane</location>
        <topology evidence="1">Single-pass type I membrane protein</topology>
    </subcellularLocation>
    <text evidence="1">Localizes to the Z ring in an FtsZ-dependent manner.</text>
</comment>
<comment type="similarity">
    <text evidence="1">Belongs to the ZipA family.</text>
</comment>
<comment type="sequence caution" evidence="3">
    <conflict type="erroneous initiation">
        <sequence resource="EMBL-CDS" id="ABE08204"/>
    </conflict>
</comment>
<name>ZIPA_ECOUT</name>
<accession>Q1R8W0</accession>
<dbReference type="EMBL" id="CP000243">
    <property type="protein sequence ID" value="ABE08204.1"/>
    <property type="status" value="ALT_INIT"/>
    <property type="molecule type" value="Genomic_DNA"/>
</dbReference>
<dbReference type="RefSeq" id="WP_001317975.1">
    <property type="nucleotide sequence ID" value="NZ_CP064825.1"/>
</dbReference>
<dbReference type="SMR" id="Q1R8W0"/>
<dbReference type="KEGG" id="eci:UTI89_C2744"/>
<dbReference type="HOGENOM" id="CLU_030174_1_0_6"/>
<dbReference type="Proteomes" id="UP000001952">
    <property type="component" value="Chromosome"/>
</dbReference>
<dbReference type="GO" id="GO:0032153">
    <property type="term" value="C:cell division site"/>
    <property type="evidence" value="ECO:0007669"/>
    <property type="project" value="UniProtKB-UniRule"/>
</dbReference>
<dbReference type="GO" id="GO:0005886">
    <property type="term" value="C:plasma membrane"/>
    <property type="evidence" value="ECO:0007669"/>
    <property type="project" value="UniProtKB-SubCell"/>
</dbReference>
<dbReference type="GO" id="GO:0000917">
    <property type="term" value="P:division septum assembly"/>
    <property type="evidence" value="ECO:0007669"/>
    <property type="project" value="TreeGrafter"/>
</dbReference>
<dbReference type="GO" id="GO:0043093">
    <property type="term" value="P:FtsZ-dependent cytokinesis"/>
    <property type="evidence" value="ECO:0007669"/>
    <property type="project" value="UniProtKB-UniRule"/>
</dbReference>
<dbReference type="CDD" id="cd00231">
    <property type="entry name" value="ZipA"/>
    <property type="match status" value="1"/>
</dbReference>
<dbReference type="FunFam" id="3.30.1400.10:FF:000001">
    <property type="entry name" value="Cell division protein ZipA"/>
    <property type="match status" value="1"/>
</dbReference>
<dbReference type="Gene3D" id="3.30.1400.10">
    <property type="entry name" value="ZipA, C-terminal FtsZ-binding domain"/>
    <property type="match status" value="1"/>
</dbReference>
<dbReference type="HAMAP" id="MF_00509">
    <property type="entry name" value="ZipA"/>
    <property type="match status" value="1"/>
</dbReference>
<dbReference type="InterPro" id="IPR011919">
    <property type="entry name" value="Cell_div_ZipA"/>
</dbReference>
<dbReference type="InterPro" id="IPR007449">
    <property type="entry name" value="ZipA_FtsZ-bd_C"/>
</dbReference>
<dbReference type="InterPro" id="IPR036765">
    <property type="entry name" value="ZipA_FtsZ-bd_C_sf"/>
</dbReference>
<dbReference type="NCBIfam" id="TIGR02205">
    <property type="entry name" value="septum_zipA"/>
    <property type="match status" value="1"/>
</dbReference>
<dbReference type="PANTHER" id="PTHR38685">
    <property type="entry name" value="CELL DIVISION PROTEIN ZIPA"/>
    <property type="match status" value="1"/>
</dbReference>
<dbReference type="PANTHER" id="PTHR38685:SF1">
    <property type="entry name" value="CELL DIVISION PROTEIN ZIPA"/>
    <property type="match status" value="1"/>
</dbReference>
<dbReference type="Pfam" id="PF04354">
    <property type="entry name" value="ZipA_C"/>
    <property type="match status" value="1"/>
</dbReference>
<dbReference type="SMART" id="SM00771">
    <property type="entry name" value="ZipA_C"/>
    <property type="match status" value="1"/>
</dbReference>
<dbReference type="SUPFAM" id="SSF64383">
    <property type="entry name" value="Cell-division protein ZipA, C-terminal domain"/>
    <property type="match status" value="1"/>
</dbReference>
<gene>
    <name evidence="1" type="primary">zipA</name>
    <name type="ordered locus">UTI89_C2744</name>
</gene>
<evidence type="ECO:0000255" key="1">
    <source>
        <dbReference type="HAMAP-Rule" id="MF_00509"/>
    </source>
</evidence>
<evidence type="ECO:0000256" key="2">
    <source>
        <dbReference type="SAM" id="MobiDB-lite"/>
    </source>
</evidence>
<evidence type="ECO:0000305" key="3"/>
<proteinExistence type="inferred from homology"/>